<reference key="1">
    <citation type="journal article" date="1997" name="Science">
        <title>The complete genome sequence of Escherichia coli K-12.</title>
        <authorList>
            <person name="Blattner F.R."/>
            <person name="Plunkett G. III"/>
            <person name="Bloch C.A."/>
            <person name="Perna N.T."/>
            <person name="Burland V."/>
            <person name="Riley M."/>
            <person name="Collado-Vides J."/>
            <person name="Glasner J.D."/>
            <person name="Rode C.K."/>
            <person name="Mayhew G.F."/>
            <person name="Gregor J."/>
            <person name="Davis N.W."/>
            <person name="Kirkpatrick H.A."/>
            <person name="Goeden M.A."/>
            <person name="Rose D.J."/>
            <person name="Mau B."/>
            <person name="Shao Y."/>
        </authorList>
    </citation>
    <scope>NUCLEOTIDE SEQUENCE [LARGE SCALE GENOMIC DNA]</scope>
    <source>
        <strain>K12 / MG1655 / ATCC 47076</strain>
    </source>
</reference>
<reference key="2">
    <citation type="journal article" date="2006" name="Mol. Syst. Biol.">
        <title>Highly accurate genome sequences of Escherichia coli K-12 strains MG1655 and W3110.</title>
        <authorList>
            <person name="Hayashi K."/>
            <person name="Morooka N."/>
            <person name="Yamamoto Y."/>
            <person name="Fujita K."/>
            <person name="Isono K."/>
            <person name="Choi S."/>
            <person name="Ohtsubo E."/>
            <person name="Baba T."/>
            <person name="Wanner B.L."/>
            <person name="Mori H."/>
            <person name="Horiuchi T."/>
        </authorList>
    </citation>
    <scope>NUCLEOTIDE SEQUENCE [LARGE SCALE GENOMIC DNA]</scope>
    <source>
        <strain>K12 / W3110 / ATCC 27325 / DSM 5911</strain>
    </source>
</reference>
<reference key="3">
    <citation type="journal article" date="2008" name="Mol. Microbiol.">
        <title>Small membrane proteins found by comparative genomics and ribosome binding site models.</title>
        <authorList>
            <person name="Hemm M.R."/>
            <person name="Paul B.J."/>
            <person name="Schneider T.D."/>
            <person name="Storz G."/>
            <person name="Rudd K.E."/>
        </authorList>
    </citation>
    <scope>IDENTIFICATION</scope>
    <scope>INDUCTION</scope>
    <source>
        <strain>K12 / MG1655 / ATCC 47076</strain>
    </source>
</reference>
<reference key="4">
    <citation type="journal article" date="2010" name="J. Bacteriol.">
        <title>Small stress response proteins in Escherichia coli: proteins missed by classical proteomic studies.</title>
        <authorList>
            <person name="Hemm M.R."/>
            <person name="Paul B.J."/>
            <person name="Miranda-Rios J."/>
            <person name="Zhang A."/>
            <person name="Soltanzad N."/>
            <person name="Storz G."/>
        </authorList>
    </citation>
    <scope>INDUCTION</scope>
    <source>
        <strain>K12 / MG1655 / ATCC 47076</strain>
    </source>
</reference>
<protein>
    <recommendedName>
        <fullName>Uncharacterized protein YoeI</fullName>
    </recommendedName>
</protein>
<gene>
    <name type="primary">yoeI</name>
    <name type="ordered locus">b4678</name>
    <name type="ordered locus">JW5330.1</name>
</gene>
<comment type="induction">
    <text evidence="1 2">In exponential phase (PubMed:19121005) repressed in minimal glycerol medium, repressed in low oxygen (PubMed:19734316) (at protein level).</text>
</comment>
<feature type="chain" id="PRO_0000381985" description="Uncharacterized protein YoeI">
    <location>
        <begin position="1"/>
        <end position="20"/>
    </location>
</feature>
<accession>C1P606</accession>
<evidence type="ECO:0000269" key="1">
    <source>
    </source>
</evidence>
<evidence type="ECO:0000269" key="2">
    <source>
    </source>
</evidence>
<organism>
    <name type="scientific">Escherichia coli (strain K12)</name>
    <dbReference type="NCBI Taxonomy" id="83333"/>
    <lineage>
        <taxon>Bacteria</taxon>
        <taxon>Pseudomonadati</taxon>
        <taxon>Pseudomonadota</taxon>
        <taxon>Gammaproteobacteria</taxon>
        <taxon>Enterobacterales</taxon>
        <taxon>Enterobacteriaceae</taxon>
        <taxon>Escherichia</taxon>
    </lineage>
</organism>
<dbReference type="EMBL" id="U00096">
    <property type="protein sequence ID" value="ACO59998.1"/>
    <property type="molecule type" value="Genomic_DNA"/>
</dbReference>
<dbReference type="EMBL" id="AP009048">
    <property type="status" value="NOT_ANNOTATED_CDS"/>
    <property type="molecule type" value="Genomic_DNA"/>
</dbReference>
<dbReference type="RefSeq" id="WP_010723108.1">
    <property type="nucleotide sequence ID" value="NZ_STEB01000048.1"/>
</dbReference>
<dbReference type="RefSeq" id="YP_002791246.1">
    <property type="nucleotide sequence ID" value="NC_000913.3"/>
</dbReference>
<dbReference type="STRING" id="511145.b4678"/>
<dbReference type="PaxDb" id="511145-b4678"/>
<dbReference type="EnsemblBacteria" id="ACO59998">
    <property type="protein sequence ID" value="ACO59998"/>
    <property type="gene ID" value="b4678"/>
</dbReference>
<dbReference type="GeneID" id="7751643"/>
<dbReference type="GeneID" id="93775160"/>
<dbReference type="KEGG" id="eco:b4678"/>
<dbReference type="InParanoid" id="C1P606"/>
<dbReference type="BioCyc" id="EcoCyc:MONOMER0-2870"/>
<dbReference type="PRO" id="PR:C1P606"/>
<dbReference type="Proteomes" id="UP000000625">
    <property type="component" value="Chromosome"/>
</dbReference>
<dbReference type="InterPro" id="IPR049776">
    <property type="entry name" value="YoeI-like"/>
</dbReference>
<dbReference type="NCBIfam" id="NF033439">
    <property type="entry name" value="small_mem_YoeI"/>
    <property type="match status" value="1"/>
</dbReference>
<sequence length="20" mass="2242">MGQFFAYATVITVKENDHVA</sequence>
<keyword id="KW-1185">Reference proteome</keyword>
<keyword id="KW-0346">Stress response</keyword>
<proteinExistence type="evidence at protein level"/>
<name>YOEI_ECOLI</name>